<keyword id="KW-0963">Cytoplasm</keyword>
<keyword id="KW-0396">Initiation factor</keyword>
<keyword id="KW-0648">Protein biosynthesis</keyword>
<keyword id="KW-1185">Reference proteome</keyword>
<feature type="chain" id="PRO_0000365038" description="Eukaryotic translation initiation factor 3 subunit K">
    <location>
        <begin position="1"/>
        <end position="218"/>
    </location>
</feature>
<feature type="domain" description="PCI" evidence="2">
    <location>
        <begin position="44"/>
        <end position="205"/>
    </location>
</feature>
<sequence>MTDTMAETMKQTVASILKSIERYNPANLEILERYVEMQSRENTYDWGANLAVLKLYQFNPEKFNADITCQILLKALTNFPHTDFTLCKCLLLESVVENETISQIKYLADILEQCDFAQFGNRVHQMPELCSRISGFHDSIRKFVCHVVGITFQTIDKNNLANLLGGIDDVTLKHWVKKYGWRDDGSLIFIANQDENIKTKNITEKIEFDHLAPLMALL</sequence>
<reference key="1">
    <citation type="submission" date="2006-03" db="EMBL/GenBank/DDBJ databases">
        <title>Blast silkworm EST database for functional genes.</title>
        <authorList>
            <person name="Niu B.L."/>
            <person name="Meng Z.Q."/>
            <person name="Weng H.B."/>
            <person name="Shen W.F."/>
            <person name="He L.H."/>
            <person name="Zheng K.F."/>
            <person name="Ye S.T."/>
            <person name="Lin T.B."/>
            <person name="Chen J.E."/>
        </authorList>
    </citation>
    <scope>NUCLEOTIDE SEQUENCE [LARGE SCALE MRNA]</scope>
</reference>
<name>EIF3K_BOMMO</name>
<dbReference type="EMBL" id="DQ443328">
    <property type="protein sequence ID" value="ABF51417.1"/>
    <property type="molecule type" value="mRNA"/>
</dbReference>
<dbReference type="RefSeq" id="NP_001040534.1">
    <property type="nucleotide sequence ID" value="NM_001047069.2"/>
</dbReference>
<dbReference type="SMR" id="Q1HPS4"/>
<dbReference type="FunCoup" id="Q1HPS4">
    <property type="interactions" value="1602"/>
</dbReference>
<dbReference type="STRING" id="7091.Q1HPS4"/>
<dbReference type="PaxDb" id="7091-BGIBMGA010671-TA"/>
<dbReference type="EnsemblMetazoa" id="NM_001047069.2">
    <property type="protein sequence ID" value="NP_001040534.1"/>
    <property type="gene ID" value="LOC733122"/>
</dbReference>
<dbReference type="GeneID" id="733122"/>
<dbReference type="KEGG" id="bmor:733122"/>
<dbReference type="CTD" id="27335"/>
<dbReference type="eggNOG" id="KOG3252">
    <property type="taxonomic scope" value="Eukaryota"/>
</dbReference>
<dbReference type="HOGENOM" id="CLU_076723_1_0_1"/>
<dbReference type="InParanoid" id="Q1HPS4"/>
<dbReference type="OrthoDB" id="433970at7088"/>
<dbReference type="Proteomes" id="UP000005204">
    <property type="component" value="Unassembled WGS sequence"/>
</dbReference>
<dbReference type="GO" id="GO:0016282">
    <property type="term" value="C:eukaryotic 43S preinitiation complex"/>
    <property type="evidence" value="ECO:0007669"/>
    <property type="project" value="UniProtKB-UniRule"/>
</dbReference>
<dbReference type="GO" id="GO:0033290">
    <property type="term" value="C:eukaryotic 48S preinitiation complex"/>
    <property type="evidence" value="ECO:0007669"/>
    <property type="project" value="UniProtKB-UniRule"/>
</dbReference>
<dbReference type="GO" id="GO:0005852">
    <property type="term" value="C:eukaryotic translation initiation factor 3 complex"/>
    <property type="evidence" value="ECO:0007669"/>
    <property type="project" value="UniProtKB-UniRule"/>
</dbReference>
<dbReference type="GO" id="GO:0043022">
    <property type="term" value="F:ribosome binding"/>
    <property type="evidence" value="ECO:0007669"/>
    <property type="project" value="InterPro"/>
</dbReference>
<dbReference type="GO" id="GO:0003723">
    <property type="term" value="F:RNA binding"/>
    <property type="evidence" value="ECO:0007669"/>
    <property type="project" value="UniProtKB-UniRule"/>
</dbReference>
<dbReference type="GO" id="GO:0003743">
    <property type="term" value="F:translation initiation factor activity"/>
    <property type="evidence" value="ECO:0007669"/>
    <property type="project" value="UniProtKB-UniRule"/>
</dbReference>
<dbReference type="GO" id="GO:0001732">
    <property type="term" value="P:formation of cytoplasmic translation initiation complex"/>
    <property type="evidence" value="ECO:0007669"/>
    <property type="project" value="UniProtKB-UniRule"/>
</dbReference>
<dbReference type="GO" id="GO:0006446">
    <property type="term" value="P:regulation of translational initiation"/>
    <property type="evidence" value="ECO:0007669"/>
    <property type="project" value="InterPro"/>
</dbReference>
<dbReference type="FunFam" id="1.10.10.10:FF:000212">
    <property type="entry name" value="Eukaryotic translation initiation factor 3 subunit K"/>
    <property type="match status" value="1"/>
</dbReference>
<dbReference type="FunFam" id="1.25.40.250:FF:000001">
    <property type="entry name" value="Eukaryotic translation initiation factor 3 subunit K"/>
    <property type="match status" value="1"/>
</dbReference>
<dbReference type="Gene3D" id="1.25.40.250">
    <property type="entry name" value="ARM repeat, domain 1"/>
    <property type="match status" value="1"/>
</dbReference>
<dbReference type="Gene3D" id="1.10.10.10">
    <property type="entry name" value="Winged helix-like DNA-binding domain superfamily/Winged helix DNA-binding domain"/>
    <property type="match status" value="1"/>
</dbReference>
<dbReference type="HAMAP" id="MF_03010">
    <property type="entry name" value="eIF3k"/>
    <property type="match status" value="1"/>
</dbReference>
<dbReference type="InterPro" id="IPR016024">
    <property type="entry name" value="ARM-type_fold"/>
</dbReference>
<dbReference type="InterPro" id="IPR033464">
    <property type="entry name" value="CSN8_PSD8_EIF3K"/>
</dbReference>
<dbReference type="InterPro" id="IPR009374">
    <property type="entry name" value="eIF3k"/>
</dbReference>
<dbReference type="InterPro" id="IPR000717">
    <property type="entry name" value="PCI_dom"/>
</dbReference>
<dbReference type="InterPro" id="IPR016020">
    <property type="entry name" value="Transl_init_fac_sub12_N_euk"/>
</dbReference>
<dbReference type="InterPro" id="IPR036388">
    <property type="entry name" value="WH-like_DNA-bd_sf"/>
</dbReference>
<dbReference type="InterPro" id="IPR036390">
    <property type="entry name" value="WH_DNA-bd_sf"/>
</dbReference>
<dbReference type="PANTHER" id="PTHR13022">
    <property type="entry name" value="EUKARYOTIC TRANSLATION INITIATION FACTOR 3 SUBUNIT 11"/>
    <property type="match status" value="1"/>
</dbReference>
<dbReference type="PANTHER" id="PTHR13022:SF0">
    <property type="entry name" value="EUKARYOTIC TRANSLATION INITIATION FACTOR 3 SUBUNIT K"/>
    <property type="match status" value="1"/>
</dbReference>
<dbReference type="Pfam" id="PF10075">
    <property type="entry name" value="CSN8_PSD8_EIF3K"/>
    <property type="match status" value="1"/>
</dbReference>
<dbReference type="SUPFAM" id="SSF48371">
    <property type="entry name" value="ARM repeat"/>
    <property type="match status" value="1"/>
</dbReference>
<dbReference type="SUPFAM" id="SSF46785">
    <property type="entry name" value="Winged helix' DNA-binding domain"/>
    <property type="match status" value="1"/>
</dbReference>
<dbReference type="PROSITE" id="PS50250">
    <property type="entry name" value="PCI"/>
    <property type="match status" value="1"/>
</dbReference>
<organism>
    <name type="scientific">Bombyx mori</name>
    <name type="common">Silk moth</name>
    <dbReference type="NCBI Taxonomy" id="7091"/>
    <lineage>
        <taxon>Eukaryota</taxon>
        <taxon>Metazoa</taxon>
        <taxon>Ecdysozoa</taxon>
        <taxon>Arthropoda</taxon>
        <taxon>Hexapoda</taxon>
        <taxon>Insecta</taxon>
        <taxon>Pterygota</taxon>
        <taxon>Neoptera</taxon>
        <taxon>Endopterygota</taxon>
        <taxon>Lepidoptera</taxon>
        <taxon>Glossata</taxon>
        <taxon>Ditrysia</taxon>
        <taxon>Bombycoidea</taxon>
        <taxon>Bombycidae</taxon>
        <taxon>Bombycinae</taxon>
        <taxon>Bombyx</taxon>
    </lineage>
</organism>
<evidence type="ECO:0000255" key="1">
    <source>
        <dbReference type="HAMAP-Rule" id="MF_03010"/>
    </source>
</evidence>
<evidence type="ECO:0000255" key="2">
    <source>
        <dbReference type="PROSITE-ProRule" id="PRU01185"/>
    </source>
</evidence>
<protein>
    <recommendedName>
        <fullName evidence="1">Eukaryotic translation initiation factor 3 subunit K</fullName>
        <shortName evidence="1">eIF3k</shortName>
    </recommendedName>
    <alternativeName>
        <fullName evidence="1">eIF-3 p25</fullName>
    </alternativeName>
</protein>
<accession>Q1HPS4</accession>
<comment type="function">
    <text evidence="1">Component of the eukaryotic translation initiation factor 3 (eIF-3) complex, which is involved in protein synthesis of a specialized repertoire of mRNAs and, together with other initiation factors, stimulates binding of mRNA and methionyl-tRNAi to the 40S ribosome. The eIF-3 complex specifically targets and initiates translation of a subset of mRNAs involved in cell proliferation.</text>
</comment>
<comment type="subunit">
    <text evidence="1">Component of the eukaryotic translation initiation factor 3 (eIF-3) complex.</text>
</comment>
<comment type="subcellular location">
    <subcellularLocation>
        <location evidence="1">Cytoplasm</location>
    </subcellularLocation>
</comment>
<comment type="similarity">
    <text evidence="1">Belongs to the eIF-3 subunit K family.</text>
</comment>
<proteinExistence type="evidence at transcript level"/>